<protein>
    <recommendedName>
        <fullName evidence="1">UDP-N-acetylmuramoyl-tripeptide--D-alanyl-D-alanine ligase</fullName>
        <ecNumber evidence="1">6.3.2.10</ecNumber>
    </recommendedName>
    <alternativeName>
        <fullName evidence="1">D-alanyl-D-alanine-adding enzyme</fullName>
    </alternativeName>
    <alternativeName>
        <fullName>UDP-MurNAc-pentapeptide synthetase</fullName>
    </alternativeName>
</protein>
<organism>
    <name type="scientific">Borreliella burgdorferi (strain ATCC 35210 / DSM 4680 / CIP 102532 / B31)</name>
    <name type="common">Borrelia burgdorferi</name>
    <dbReference type="NCBI Taxonomy" id="224326"/>
    <lineage>
        <taxon>Bacteria</taxon>
        <taxon>Pseudomonadati</taxon>
        <taxon>Spirochaetota</taxon>
        <taxon>Spirochaetia</taxon>
        <taxon>Spirochaetales</taxon>
        <taxon>Borreliaceae</taxon>
        <taxon>Borreliella</taxon>
    </lineage>
</organism>
<evidence type="ECO:0000255" key="1">
    <source>
        <dbReference type="HAMAP-Rule" id="MF_02019"/>
    </source>
</evidence>
<evidence type="ECO:0000305" key="2"/>
<proteinExistence type="inferred from homology"/>
<gene>
    <name evidence="1" type="primary">murF</name>
    <name type="ordered locus">BB_0304</name>
</gene>
<keyword id="KW-0067">ATP-binding</keyword>
<keyword id="KW-0131">Cell cycle</keyword>
<keyword id="KW-0132">Cell division</keyword>
<keyword id="KW-0133">Cell shape</keyword>
<keyword id="KW-0961">Cell wall biogenesis/degradation</keyword>
<keyword id="KW-0963">Cytoplasm</keyword>
<keyword id="KW-0436">Ligase</keyword>
<keyword id="KW-0547">Nucleotide-binding</keyword>
<keyword id="KW-0573">Peptidoglycan synthesis</keyword>
<keyword id="KW-1185">Reference proteome</keyword>
<accession>Q44777</accession>
<accession>O51284</accession>
<name>MURF_BORBU</name>
<dbReference type="EC" id="6.3.2.10" evidence="1"/>
<dbReference type="EMBL" id="AE000783">
    <property type="protein sequence ID" value="AAC66644.1"/>
    <property type="molecule type" value="Genomic_DNA"/>
</dbReference>
<dbReference type="EMBL" id="U43739">
    <property type="protein sequence ID" value="AAA85627.1"/>
    <property type="molecule type" value="Genomic_DNA"/>
</dbReference>
<dbReference type="PIR" id="H70137">
    <property type="entry name" value="H70137"/>
</dbReference>
<dbReference type="RefSeq" id="NP_212438.1">
    <property type="nucleotide sequence ID" value="NC_001318.1"/>
</dbReference>
<dbReference type="RefSeq" id="WP_010889724.1">
    <property type="nucleotide sequence ID" value="NC_001318.1"/>
</dbReference>
<dbReference type="SMR" id="Q44777"/>
<dbReference type="STRING" id="224326.BB_0304"/>
<dbReference type="PaxDb" id="224326-BB_0304"/>
<dbReference type="EnsemblBacteria" id="AAC66644">
    <property type="protein sequence ID" value="AAC66644"/>
    <property type="gene ID" value="BB_0304"/>
</dbReference>
<dbReference type="KEGG" id="bbu:BB_0304"/>
<dbReference type="PATRIC" id="fig|224326.49.peg.703"/>
<dbReference type="HOGENOM" id="CLU_031507_1_0_12"/>
<dbReference type="OrthoDB" id="9801978at2"/>
<dbReference type="UniPathway" id="UPA00219"/>
<dbReference type="Proteomes" id="UP000001807">
    <property type="component" value="Chromosome"/>
</dbReference>
<dbReference type="GO" id="GO:0005737">
    <property type="term" value="C:cytoplasm"/>
    <property type="evidence" value="ECO:0007669"/>
    <property type="project" value="UniProtKB-SubCell"/>
</dbReference>
<dbReference type="GO" id="GO:0005524">
    <property type="term" value="F:ATP binding"/>
    <property type="evidence" value="ECO:0007669"/>
    <property type="project" value="UniProtKB-UniRule"/>
</dbReference>
<dbReference type="GO" id="GO:0047480">
    <property type="term" value="F:UDP-N-acetylmuramoyl-tripeptide-D-alanyl-D-alanine ligase activity"/>
    <property type="evidence" value="ECO:0007669"/>
    <property type="project" value="UniProtKB-UniRule"/>
</dbReference>
<dbReference type="GO" id="GO:0008766">
    <property type="term" value="F:UDP-N-acetylmuramoylalanyl-D-glutamyl-2,6-diaminopimelate-D-alanyl-D-alanine ligase activity"/>
    <property type="evidence" value="ECO:0007669"/>
    <property type="project" value="RHEA"/>
</dbReference>
<dbReference type="GO" id="GO:0051301">
    <property type="term" value="P:cell division"/>
    <property type="evidence" value="ECO:0007669"/>
    <property type="project" value="UniProtKB-KW"/>
</dbReference>
<dbReference type="GO" id="GO:0071555">
    <property type="term" value="P:cell wall organization"/>
    <property type="evidence" value="ECO:0007669"/>
    <property type="project" value="UniProtKB-KW"/>
</dbReference>
<dbReference type="GO" id="GO:0009252">
    <property type="term" value="P:peptidoglycan biosynthetic process"/>
    <property type="evidence" value="ECO:0007669"/>
    <property type="project" value="UniProtKB-UniRule"/>
</dbReference>
<dbReference type="GO" id="GO:0008360">
    <property type="term" value="P:regulation of cell shape"/>
    <property type="evidence" value="ECO:0007669"/>
    <property type="project" value="UniProtKB-KW"/>
</dbReference>
<dbReference type="Gene3D" id="3.90.190.20">
    <property type="entry name" value="Mur ligase, C-terminal domain"/>
    <property type="match status" value="1"/>
</dbReference>
<dbReference type="Gene3D" id="3.40.1190.10">
    <property type="entry name" value="Mur-like, catalytic domain"/>
    <property type="match status" value="1"/>
</dbReference>
<dbReference type="Gene3D" id="3.40.1390.10">
    <property type="entry name" value="MurE/MurF, N-terminal domain"/>
    <property type="match status" value="1"/>
</dbReference>
<dbReference type="HAMAP" id="MF_02019">
    <property type="entry name" value="MurF"/>
    <property type="match status" value="1"/>
</dbReference>
<dbReference type="InterPro" id="IPR036565">
    <property type="entry name" value="Mur-like_cat_sf"/>
</dbReference>
<dbReference type="InterPro" id="IPR004101">
    <property type="entry name" value="Mur_ligase_C"/>
</dbReference>
<dbReference type="InterPro" id="IPR036615">
    <property type="entry name" value="Mur_ligase_C_dom_sf"/>
</dbReference>
<dbReference type="InterPro" id="IPR013221">
    <property type="entry name" value="Mur_ligase_cen"/>
</dbReference>
<dbReference type="InterPro" id="IPR000713">
    <property type="entry name" value="Mur_ligase_N"/>
</dbReference>
<dbReference type="InterPro" id="IPR051046">
    <property type="entry name" value="MurCDEF_CellWall_CoF430Synth"/>
</dbReference>
<dbReference type="InterPro" id="IPR035911">
    <property type="entry name" value="MurE/MurF_N"/>
</dbReference>
<dbReference type="InterPro" id="IPR005863">
    <property type="entry name" value="UDP-N-AcMur_synth"/>
</dbReference>
<dbReference type="NCBIfam" id="TIGR01143">
    <property type="entry name" value="murF"/>
    <property type="match status" value="1"/>
</dbReference>
<dbReference type="PANTHER" id="PTHR43024">
    <property type="entry name" value="UDP-N-ACETYLMURAMOYL-TRIPEPTIDE--D-ALANYL-D-ALANINE LIGASE"/>
    <property type="match status" value="1"/>
</dbReference>
<dbReference type="PANTHER" id="PTHR43024:SF1">
    <property type="entry name" value="UDP-N-ACETYLMURAMOYL-TRIPEPTIDE--D-ALANYL-D-ALANINE LIGASE"/>
    <property type="match status" value="1"/>
</dbReference>
<dbReference type="Pfam" id="PF01225">
    <property type="entry name" value="Mur_ligase"/>
    <property type="match status" value="1"/>
</dbReference>
<dbReference type="Pfam" id="PF02875">
    <property type="entry name" value="Mur_ligase_C"/>
    <property type="match status" value="1"/>
</dbReference>
<dbReference type="Pfam" id="PF08245">
    <property type="entry name" value="Mur_ligase_M"/>
    <property type="match status" value="1"/>
</dbReference>
<dbReference type="SUPFAM" id="SSF53623">
    <property type="entry name" value="MurD-like peptide ligases, catalytic domain"/>
    <property type="match status" value="1"/>
</dbReference>
<dbReference type="SUPFAM" id="SSF53244">
    <property type="entry name" value="MurD-like peptide ligases, peptide-binding domain"/>
    <property type="match status" value="1"/>
</dbReference>
<dbReference type="SUPFAM" id="SSF63418">
    <property type="entry name" value="MurE/MurF N-terminal domain"/>
    <property type="match status" value="1"/>
</dbReference>
<comment type="function">
    <text evidence="1">Involved in cell wall formation. Catalyzes the final step in the synthesis of UDP-N-acetylmuramoyl-pentapeptide, the precursor of murein.</text>
</comment>
<comment type="catalytic activity">
    <reaction evidence="1">
        <text>D-alanyl-D-alanine + UDP-N-acetyl-alpha-D-muramoyl-L-alanyl-gamma-D-glutamyl-meso-2,6-diaminopimelate + ATP = UDP-N-acetyl-alpha-D-muramoyl-L-alanyl-gamma-D-glutamyl-meso-2,6-diaminopimeloyl-D-alanyl-D-alanine + ADP + phosphate + H(+)</text>
        <dbReference type="Rhea" id="RHEA:28374"/>
        <dbReference type="ChEBI" id="CHEBI:15378"/>
        <dbReference type="ChEBI" id="CHEBI:30616"/>
        <dbReference type="ChEBI" id="CHEBI:43474"/>
        <dbReference type="ChEBI" id="CHEBI:57822"/>
        <dbReference type="ChEBI" id="CHEBI:61386"/>
        <dbReference type="ChEBI" id="CHEBI:83905"/>
        <dbReference type="ChEBI" id="CHEBI:456216"/>
        <dbReference type="EC" id="6.3.2.10"/>
    </reaction>
</comment>
<comment type="pathway">
    <text evidence="1">Cell wall biogenesis; peptidoglycan biosynthesis.</text>
</comment>
<comment type="subcellular location">
    <subcellularLocation>
        <location evidence="1">Cytoplasm</location>
    </subcellularLocation>
</comment>
<comment type="similarity">
    <text evidence="1">Belongs to the MurCDEF family. MurF subfamily.</text>
</comment>
<feature type="chain" id="PRO_0000101695" description="UDP-N-acetylmuramoyl-tripeptide--D-alanyl-D-alanine ligase">
    <location>
        <begin position="1"/>
        <end position="464"/>
    </location>
</feature>
<feature type="binding site" evidence="1">
    <location>
        <begin position="125"/>
        <end position="131"/>
    </location>
    <ligand>
        <name>ATP</name>
        <dbReference type="ChEBI" id="CHEBI:30616"/>
    </ligand>
</feature>
<feature type="sequence conflict" description="In Ref. 2; AAA85627." evidence="2" ref="2">
    <original>IFR</original>
    <variation>YI</variation>
    <location>
        <begin position="462"/>
        <end position="464"/>
    </location>
</feature>
<reference key="1">
    <citation type="journal article" date="1997" name="Nature">
        <title>Genomic sequence of a Lyme disease spirochaete, Borrelia burgdorferi.</title>
        <authorList>
            <person name="Fraser C.M."/>
            <person name="Casjens S."/>
            <person name="Huang W.M."/>
            <person name="Sutton G.G."/>
            <person name="Clayton R.A."/>
            <person name="Lathigra R."/>
            <person name="White O."/>
            <person name="Ketchum K.A."/>
            <person name="Dodson R.J."/>
            <person name="Hickey E.K."/>
            <person name="Gwinn M.L."/>
            <person name="Dougherty B.A."/>
            <person name="Tomb J.-F."/>
            <person name="Fleischmann R.D."/>
            <person name="Richardson D.L."/>
            <person name="Peterson J.D."/>
            <person name="Kerlavage A.R."/>
            <person name="Quackenbush J."/>
            <person name="Salzberg S.L."/>
            <person name="Hanson M."/>
            <person name="van Vugt R."/>
            <person name="Palmer N."/>
            <person name="Adams M.D."/>
            <person name="Gocayne J.D."/>
            <person name="Weidman J.F."/>
            <person name="Utterback T.R."/>
            <person name="Watthey L."/>
            <person name="McDonald L.A."/>
            <person name="Artiach P."/>
            <person name="Bowman C."/>
            <person name="Garland S.A."/>
            <person name="Fujii C."/>
            <person name="Cotton M.D."/>
            <person name="Horst K."/>
            <person name="Roberts K.M."/>
            <person name="Hatch B."/>
            <person name="Smith H.O."/>
            <person name="Venter J.C."/>
        </authorList>
    </citation>
    <scope>NUCLEOTIDE SEQUENCE [LARGE SCALE GENOMIC DNA]</scope>
    <source>
        <strain>ATCC 35210 / DSM 4680 / CIP 102532 / B31</strain>
    </source>
</reference>
<reference key="2">
    <citation type="submission" date="1995-12" db="EMBL/GenBank/DDBJ databases">
        <authorList>
            <person name="Dunn J.J."/>
            <person name="Butler-Loffredo L."/>
            <person name="Kieleczawa J."/>
            <person name="Medalle J."/>
            <person name="Luft B.J."/>
        </authorList>
    </citation>
    <scope>NUCLEOTIDE SEQUENCE [GENOMIC DNA] OF 67-464</scope>
    <source>
        <strain>ATCC 35210 / DSM 4680 / CIP 102532 / B31</strain>
    </source>
</reference>
<sequence>MRIKIKDILISSKDVKFVGNIKNIERVVSFYSLDSREIKDDNINDSLYFAYKGNKVDGFSFVKYLIDLGVKCFACSREHESECIKYLNDNEGLVFLLTSNVIKLLQALASFLIEKTSFKRIAITGSNGKTTTKEMLYSILSKKYKTYKTWGNLNSDIGLPLSILRVEGNEEYAVFEVGVSYVGEMDLLSQILKPEIVIITNISYAHMQAFKELQAIAFEKSKIIGKNIEIFVVNEMNDYCVYLEKRAKIANPNVKIVYFDFENLSIKSFSFLDGKFSFDFVYKGFEYSILLLGRHNIFNAIGCINLALFLGMREKEIKEGLIETAFQKGRAEILTKNGYLILNDSYNGNMGSFMALKNMILDLNIQNKKFIVLGSFKELGELAYKTHKDLIQEAISMNFDKIFLIGEEFLDVRDSENLVEKCLYYFSEFDKFIDFFLKSLEPSVFIVIKGSRFNRLERILNIFR</sequence>